<feature type="chain" id="PRO_0000144889" description="L-aspartate dehydrogenase">
    <location>
        <begin position="1"/>
        <end position="271"/>
    </location>
</feature>
<feature type="active site" evidence="1">
    <location>
        <position position="224"/>
    </location>
</feature>
<feature type="binding site" evidence="1">
    <location>
        <position position="128"/>
    </location>
    <ligand>
        <name>NAD(+)</name>
        <dbReference type="ChEBI" id="CHEBI:57540"/>
    </ligand>
</feature>
<feature type="binding site" evidence="1">
    <location>
        <position position="194"/>
    </location>
    <ligand>
        <name>NAD(+)</name>
        <dbReference type="ChEBI" id="CHEBI:57540"/>
    </ligand>
</feature>
<gene>
    <name evidence="1" type="primary">nadX</name>
    <name type="ordered locus">BPSS0903</name>
</gene>
<comment type="function">
    <text evidence="1">Specifically catalyzes the NAD or NADP-dependent dehydrogenation of L-aspartate to iminoaspartate.</text>
</comment>
<comment type="catalytic activity">
    <reaction evidence="1">
        <text>L-aspartate + NADP(+) + H2O = oxaloacetate + NH4(+) + NADPH + H(+)</text>
        <dbReference type="Rhea" id="RHEA:11784"/>
        <dbReference type="ChEBI" id="CHEBI:15377"/>
        <dbReference type="ChEBI" id="CHEBI:15378"/>
        <dbReference type="ChEBI" id="CHEBI:16452"/>
        <dbReference type="ChEBI" id="CHEBI:28938"/>
        <dbReference type="ChEBI" id="CHEBI:29991"/>
        <dbReference type="ChEBI" id="CHEBI:57783"/>
        <dbReference type="ChEBI" id="CHEBI:58349"/>
        <dbReference type="EC" id="1.4.1.21"/>
    </reaction>
</comment>
<comment type="catalytic activity">
    <reaction evidence="1">
        <text>L-aspartate + NAD(+) + H2O = oxaloacetate + NH4(+) + NADH + H(+)</text>
        <dbReference type="Rhea" id="RHEA:11788"/>
        <dbReference type="ChEBI" id="CHEBI:15377"/>
        <dbReference type="ChEBI" id="CHEBI:15378"/>
        <dbReference type="ChEBI" id="CHEBI:16452"/>
        <dbReference type="ChEBI" id="CHEBI:28938"/>
        <dbReference type="ChEBI" id="CHEBI:29991"/>
        <dbReference type="ChEBI" id="CHEBI:57540"/>
        <dbReference type="ChEBI" id="CHEBI:57945"/>
        <dbReference type="EC" id="1.4.1.21"/>
    </reaction>
</comment>
<comment type="pathway">
    <text evidence="1">Cofactor biosynthesis; NAD(+) biosynthesis; iminoaspartate from L-aspartate (dehydrogenase route): step 1/1.</text>
</comment>
<comment type="miscellaneous">
    <text evidence="1">The iminoaspartate product is unstable in aqueous solution and can decompose to oxaloacetate and ammonia.</text>
</comment>
<comment type="similarity">
    <text evidence="1">Belongs to the L-aspartate dehydrogenase family.</text>
</comment>
<proteinExistence type="inferred from homology"/>
<protein>
    <recommendedName>
        <fullName evidence="1">L-aspartate dehydrogenase</fullName>
        <ecNumber evidence="1">1.4.1.21</ecNumber>
    </recommendedName>
</protein>
<keyword id="KW-0520">NAD</keyword>
<keyword id="KW-0521">NADP</keyword>
<keyword id="KW-0560">Oxidoreductase</keyword>
<keyword id="KW-0662">Pyridine nucleotide biosynthesis</keyword>
<keyword id="KW-1185">Reference proteome</keyword>
<organism>
    <name type="scientific">Burkholderia pseudomallei (strain K96243)</name>
    <dbReference type="NCBI Taxonomy" id="272560"/>
    <lineage>
        <taxon>Bacteria</taxon>
        <taxon>Pseudomonadati</taxon>
        <taxon>Pseudomonadota</taxon>
        <taxon>Betaproteobacteria</taxon>
        <taxon>Burkholderiales</taxon>
        <taxon>Burkholderiaceae</taxon>
        <taxon>Burkholderia</taxon>
        <taxon>pseudomallei group</taxon>
    </lineage>
</organism>
<sequence length="271" mass="27704">MLNAHAPVDVAMIGFGAIGAAVYRAVEHDAALRVAHVIVPEHQCDAVRGALGERVDVVSSVDALACRPQFALECAGHGALVDHVVPLLKAGTDCAVASIGALSDLALLDALSNAADAGGATLTLLSGAIGGIDALAAARQGGLDEVRYIGRKPPLGWLGTPAEAICDLRAMAAEQTIFEGSARDAAQLYPRNANVAATVALAGVGLDATRVCLIADPAVTRNVHRIVARGAFGEMSIEMSGKPLPDNPKTSALTAFSAIRALRNRASHCVI</sequence>
<accession>Q63LV9</accession>
<evidence type="ECO:0000255" key="1">
    <source>
        <dbReference type="HAMAP-Rule" id="MF_01265"/>
    </source>
</evidence>
<name>ASPD_BURPS</name>
<dbReference type="EC" id="1.4.1.21" evidence="1"/>
<dbReference type="EMBL" id="BX571966">
    <property type="protein sequence ID" value="CAH38365.1"/>
    <property type="molecule type" value="Genomic_DNA"/>
</dbReference>
<dbReference type="RefSeq" id="WP_004551585.1">
    <property type="nucleotide sequence ID" value="NZ_CP009537.1"/>
</dbReference>
<dbReference type="RefSeq" id="YP_110912.1">
    <property type="nucleotide sequence ID" value="NC_006351.1"/>
</dbReference>
<dbReference type="SMR" id="Q63LV9"/>
<dbReference type="STRING" id="272560.BPSS0903"/>
<dbReference type="KEGG" id="bps:BPSS0903"/>
<dbReference type="PATRIC" id="fig|272560.51.peg.7196"/>
<dbReference type="eggNOG" id="COG1712">
    <property type="taxonomic scope" value="Bacteria"/>
</dbReference>
<dbReference type="UniPathway" id="UPA00253">
    <property type="reaction ID" value="UER00456"/>
</dbReference>
<dbReference type="Proteomes" id="UP000000605">
    <property type="component" value="Chromosome 2"/>
</dbReference>
<dbReference type="GO" id="GO:0033735">
    <property type="term" value="F:aspartate dehydrogenase activity"/>
    <property type="evidence" value="ECO:0007669"/>
    <property type="project" value="UniProtKB-EC"/>
</dbReference>
<dbReference type="GO" id="GO:0051287">
    <property type="term" value="F:NAD binding"/>
    <property type="evidence" value="ECO:0007669"/>
    <property type="project" value="UniProtKB-UniRule"/>
</dbReference>
<dbReference type="GO" id="GO:0050661">
    <property type="term" value="F:NADP binding"/>
    <property type="evidence" value="ECO:0007669"/>
    <property type="project" value="UniProtKB-UniRule"/>
</dbReference>
<dbReference type="GO" id="GO:0016639">
    <property type="term" value="F:oxidoreductase activity, acting on the CH-NH2 group of donors, NAD or NADP as acceptor"/>
    <property type="evidence" value="ECO:0007669"/>
    <property type="project" value="UniProtKB-UniRule"/>
</dbReference>
<dbReference type="GO" id="GO:0009435">
    <property type="term" value="P:NAD biosynthetic process"/>
    <property type="evidence" value="ECO:0007669"/>
    <property type="project" value="UniProtKB-UniRule"/>
</dbReference>
<dbReference type="Gene3D" id="3.30.360.10">
    <property type="entry name" value="Dihydrodipicolinate Reductase, domain 2"/>
    <property type="match status" value="1"/>
</dbReference>
<dbReference type="Gene3D" id="3.40.50.720">
    <property type="entry name" value="NAD(P)-binding Rossmann-like Domain"/>
    <property type="match status" value="1"/>
</dbReference>
<dbReference type="HAMAP" id="MF_01265">
    <property type="entry name" value="NadX"/>
    <property type="match status" value="1"/>
</dbReference>
<dbReference type="InterPro" id="IPR005106">
    <property type="entry name" value="Asp/hSer_DH_NAD-bd"/>
</dbReference>
<dbReference type="InterPro" id="IPR002811">
    <property type="entry name" value="Asp_DH"/>
</dbReference>
<dbReference type="InterPro" id="IPR020626">
    <property type="entry name" value="Asp_DH_prok"/>
</dbReference>
<dbReference type="InterPro" id="IPR011182">
    <property type="entry name" value="L-Asp_DH"/>
</dbReference>
<dbReference type="InterPro" id="IPR036291">
    <property type="entry name" value="NAD(P)-bd_dom_sf"/>
</dbReference>
<dbReference type="NCBIfam" id="NF009826">
    <property type="entry name" value="PRK13303.1-1"/>
    <property type="match status" value="1"/>
</dbReference>
<dbReference type="NCBIfam" id="NF009827">
    <property type="entry name" value="PRK13303.1-2"/>
    <property type="match status" value="1"/>
</dbReference>
<dbReference type="NCBIfam" id="NF009828">
    <property type="entry name" value="PRK13303.1-3"/>
    <property type="match status" value="1"/>
</dbReference>
<dbReference type="PANTHER" id="PTHR31873:SF6">
    <property type="entry name" value="ASPARTATE DEHYDROGENASE DOMAIN-CONTAINING PROTEIN"/>
    <property type="match status" value="1"/>
</dbReference>
<dbReference type="PANTHER" id="PTHR31873">
    <property type="entry name" value="L-ASPARTATE DEHYDROGENASE-RELATED"/>
    <property type="match status" value="1"/>
</dbReference>
<dbReference type="Pfam" id="PF01958">
    <property type="entry name" value="Asp_DH_C"/>
    <property type="match status" value="1"/>
</dbReference>
<dbReference type="Pfam" id="PF03447">
    <property type="entry name" value="NAD_binding_3"/>
    <property type="match status" value="1"/>
</dbReference>
<dbReference type="PIRSF" id="PIRSF005227">
    <property type="entry name" value="Asp_dh_NAD_syn"/>
    <property type="match status" value="1"/>
</dbReference>
<dbReference type="SUPFAM" id="SSF55347">
    <property type="entry name" value="Glyceraldehyde-3-phosphate dehydrogenase-like, C-terminal domain"/>
    <property type="match status" value="1"/>
</dbReference>
<dbReference type="SUPFAM" id="SSF51735">
    <property type="entry name" value="NAD(P)-binding Rossmann-fold domains"/>
    <property type="match status" value="1"/>
</dbReference>
<reference key="1">
    <citation type="journal article" date="2004" name="Proc. Natl. Acad. Sci. U.S.A.">
        <title>Genomic plasticity of the causative agent of melioidosis, Burkholderia pseudomallei.</title>
        <authorList>
            <person name="Holden M.T.G."/>
            <person name="Titball R.W."/>
            <person name="Peacock S.J."/>
            <person name="Cerdeno-Tarraga A.-M."/>
            <person name="Atkins T."/>
            <person name="Crossman L.C."/>
            <person name="Pitt T."/>
            <person name="Churcher C."/>
            <person name="Mungall K.L."/>
            <person name="Bentley S.D."/>
            <person name="Sebaihia M."/>
            <person name="Thomson N.R."/>
            <person name="Bason N."/>
            <person name="Beacham I.R."/>
            <person name="Brooks K."/>
            <person name="Brown K.A."/>
            <person name="Brown N.F."/>
            <person name="Challis G.L."/>
            <person name="Cherevach I."/>
            <person name="Chillingworth T."/>
            <person name="Cronin A."/>
            <person name="Crossett B."/>
            <person name="Davis P."/>
            <person name="DeShazer D."/>
            <person name="Feltwell T."/>
            <person name="Fraser A."/>
            <person name="Hance Z."/>
            <person name="Hauser H."/>
            <person name="Holroyd S."/>
            <person name="Jagels K."/>
            <person name="Keith K.E."/>
            <person name="Maddison M."/>
            <person name="Moule S."/>
            <person name="Price C."/>
            <person name="Quail M.A."/>
            <person name="Rabbinowitsch E."/>
            <person name="Rutherford K."/>
            <person name="Sanders M."/>
            <person name="Simmonds M."/>
            <person name="Songsivilai S."/>
            <person name="Stevens K."/>
            <person name="Tumapa S."/>
            <person name="Vesaratchavest M."/>
            <person name="Whitehead S."/>
            <person name="Yeats C."/>
            <person name="Barrell B.G."/>
            <person name="Oyston P.C.F."/>
            <person name="Parkhill J."/>
        </authorList>
    </citation>
    <scope>NUCLEOTIDE SEQUENCE [LARGE SCALE GENOMIC DNA]</scope>
    <source>
        <strain>K96243</strain>
    </source>
</reference>